<protein>
    <recommendedName>
        <fullName evidence="1">1,4-alpha-glucan branching enzyme GlgB</fullName>
        <ecNumber evidence="1">2.4.1.18</ecNumber>
    </recommendedName>
    <alternativeName>
        <fullName evidence="1">1,4-alpha-D-glucan:1,4-alpha-D-glucan 6-glucosyl-transferase</fullName>
    </alternativeName>
    <alternativeName>
        <fullName evidence="1">Alpha-(1-&gt;4)-glucan branching enzyme</fullName>
    </alternativeName>
    <alternativeName>
        <fullName evidence="1">Glycogen branching enzyme</fullName>
        <shortName evidence="1">BE</shortName>
    </alternativeName>
</protein>
<feature type="chain" id="PRO_1000147759" description="1,4-alpha-glucan branching enzyme GlgB">
    <location>
        <begin position="1"/>
        <end position="630"/>
    </location>
</feature>
<feature type="active site" description="Nucleophile" evidence="1">
    <location>
        <position position="308"/>
    </location>
</feature>
<feature type="active site" description="Proton donor" evidence="1">
    <location>
        <position position="361"/>
    </location>
</feature>
<proteinExistence type="inferred from homology"/>
<gene>
    <name evidence="1" type="primary">glgB</name>
    <name type="ordered locus">Hore_06930</name>
</gene>
<sequence length="630" mass="74401">MKDKIPTDYDRYLFHQGSHYKSYEFLGAHPCEENGKTGVRFSVWAPNAAEVRVIGSFNNWDGNINPMERINDSGIWTTFIPEAKKGDLYKYEILTKYGDTRIKSDPYAFYAERKPKTASIVYSLNNYKWNDKKWMDKKKDYTVYNKPVLIYEVHLGSWKRKENGDYLTYRELANELVEYVKDMGYNYIELLPVAEHPFDGSWGYQLTNYYSVTSRYGTPEDFMYFIDKCHQNGIGVILDWVPGHFCKDDHGLRLFDGTALYEPQDPRKAENEWDTLNFDFNQPEVWSFLISNAVFWFDIYHIDGLRVDAVSNLLYLNHGKGDGEWVPNKYGGHENLEAIDFIKTLNKVIFEYFPNPLMIAEESSAWPLVTYPAHLGGLGFNYKWNMGWMNDTLEYMEMDSIYRKYHHNLLTFSFMYMFSENFVLPLSHDEVVHGKKSLLDKMPGDYWQKFANLRTLYGYMMGHPGKKLLFMGGEFGQFIEWNYKQGLDWLLLDYDMHKKLQNYVRELNYFYRQEKTLWEGDHEDGGFEWIDPHDSEQSIITFMRKNKDGSDYTIIVCNFTPEVRHNYRIGVPEFKEYKEVFNSDLEKFGGSGQKNSTIIQPSEQPWHNRPYSIEITIPPLATIFFKPLNQ</sequence>
<reference key="1">
    <citation type="journal article" date="2009" name="PLoS ONE">
        <title>Genome analysis of the anaerobic thermohalophilic bacterium Halothermothrix orenii.</title>
        <authorList>
            <person name="Mavromatis K."/>
            <person name="Ivanova N."/>
            <person name="Anderson I."/>
            <person name="Lykidis A."/>
            <person name="Hooper S.D."/>
            <person name="Sun H."/>
            <person name="Kunin V."/>
            <person name="Lapidus A."/>
            <person name="Hugenholtz P."/>
            <person name="Patel B."/>
            <person name="Kyrpides N.C."/>
        </authorList>
    </citation>
    <scope>NUCLEOTIDE SEQUENCE [LARGE SCALE GENOMIC DNA]</scope>
    <source>
        <strain>H 168 / OCM 544 / DSM 9562</strain>
    </source>
</reference>
<name>GLGB_HALOH</name>
<keyword id="KW-0119">Carbohydrate metabolism</keyword>
<keyword id="KW-0320">Glycogen biosynthesis</keyword>
<keyword id="KW-0321">Glycogen metabolism</keyword>
<keyword id="KW-0328">Glycosyltransferase</keyword>
<keyword id="KW-1185">Reference proteome</keyword>
<keyword id="KW-0808">Transferase</keyword>
<dbReference type="EC" id="2.4.1.18" evidence="1"/>
<dbReference type="EMBL" id="CP001098">
    <property type="protein sequence ID" value="ACL69450.1"/>
    <property type="molecule type" value="Genomic_DNA"/>
</dbReference>
<dbReference type="RefSeq" id="WP_012635638.1">
    <property type="nucleotide sequence ID" value="NC_011899.1"/>
</dbReference>
<dbReference type="SMR" id="B8CVY1"/>
<dbReference type="STRING" id="373903.Hore_06930"/>
<dbReference type="CAZy" id="CBM48">
    <property type="family name" value="Carbohydrate-Binding Module Family 48"/>
</dbReference>
<dbReference type="CAZy" id="GH13">
    <property type="family name" value="Glycoside Hydrolase Family 13"/>
</dbReference>
<dbReference type="KEGG" id="hor:Hore_06930"/>
<dbReference type="eggNOG" id="COG0296">
    <property type="taxonomic scope" value="Bacteria"/>
</dbReference>
<dbReference type="HOGENOM" id="CLU_004245_4_0_9"/>
<dbReference type="OrthoDB" id="9800174at2"/>
<dbReference type="UniPathway" id="UPA00164"/>
<dbReference type="Proteomes" id="UP000000719">
    <property type="component" value="Chromosome"/>
</dbReference>
<dbReference type="GO" id="GO:0005829">
    <property type="term" value="C:cytosol"/>
    <property type="evidence" value="ECO:0007669"/>
    <property type="project" value="TreeGrafter"/>
</dbReference>
<dbReference type="GO" id="GO:0003844">
    <property type="term" value="F:1,4-alpha-glucan branching enzyme activity"/>
    <property type="evidence" value="ECO:0007669"/>
    <property type="project" value="UniProtKB-UniRule"/>
</dbReference>
<dbReference type="GO" id="GO:0043169">
    <property type="term" value="F:cation binding"/>
    <property type="evidence" value="ECO:0007669"/>
    <property type="project" value="InterPro"/>
</dbReference>
<dbReference type="GO" id="GO:0004553">
    <property type="term" value="F:hydrolase activity, hydrolyzing O-glycosyl compounds"/>
    <property type="evidence" value="ECO:0007669"/>
    <property type="project" value="InterPro"/>
</dbReference>
<dbReference type="GO" id="GO:0005978">
    <property type="term" value="P:glycogen biosynthetic process"/>
    <property type="evidence" value="ECO:0007669"/>
    <property type="project" value="UniProtKB-UniRule"/>
</dbReference>
<dbReference type="CDD" id="cd11322">
    <property type="entry name" value="AmyAc_Glg_BE"/>
    <property type="match status" value="1"/>
</dbReference>
<dbReference type="CDD" id="cd02855">
    <property type="entry name" value="E_set_GBE_prok_N"/>
    <property type="match status" value="1"/>
</dbReference>
<dbReference type="FunFam" id="2.60.40.10:FF:000169">
    <property type="entry name" value="1,4-alpha-glucan branching enzyme GlgB"/>
    <property type="match status" value="1"/>
</dbReference>
<dbReference type="FunFam" id="2.60.40.1180:FF:000002">
    <property type="entry name" value="1,4-alpha-glucan branching enzyme GlgB"/>
    <property type="match status" value="1"/>
</dbReference>
<dbReference type="FunFam" id="3.20.20.80:FF:000003">
    <property type="entry name" value="1,4-alpha-glucan branching enzyme GlgB"/>
    <property type="match status" value="1"/>
</dbReference>
<dbReference type="Gene3D" id="3.20.20.80">
    <property type="entry name" value="Glycosidases"/>
    <property type="match status" value="1"/>
</dbReference>
<dbReference type="Gene3D" id="2.60.40.1180">
    <property type="entry name" value="Golgi alpha-mannosidase II"/>
    <property type="match status" value="1"/>
</dbReference>
<dbReference type="Gene3D" id="2.60.40.10">
    <property type="entry name" value="Immunoglobulins"/>
    <property type="match status" value="1"/>
</dbReference>
<dbReference type="HAMAP" id="MF_00685">
    <property type="entry name" value="GlgB"/>
    <property type="match status" value="1"/>
</dbReference>
<dbReference type="InterPro" id="IPR006048">
    <property type="entry name" value="A-amylase/branching_C"/>
</dbReference>
<dbReference type="InterPro" id="IPR037439">
    <property type="entry name" value="Branching_enzy"/>
</dbReference>
<dbReference type="InterPro" id="IPR006407">
    <property type="entry name" value="GlgB"/>
</dbReference>
<dbReference type="InterPro" id="IPR044143">
    <property type="entry name" value="GlgB_N_E_set_prok"/>
</dbReference>
<dbReference type="InterPro" id="IPR006047">
    <property type="entry name" value="Glyco_hydro_13_cat_dom"/>
</dbReference>
<dbReference type="InterPro" id="IPR004193">
    <property type="entry name" value="Glyco_hydro_13_N"/>
</dbReference>
<dbReference type="InterPro" id="IPR013780">
    <property type="entry name" value="Glyco_hydro_b"/>
</dbReference>
<dbReference type="InterPro" id="IPR017853">
    <property type="entry name" value="Glycoside_hydrolase_SF"/>
</dbReference>
<dbReference type="InterPro" id="IPR013783">
    <property type="entry name" value="Ig-like_fold"/>
</dbReference>
<dbReference type="NCBIfam" id="TIGR01515">
    <property type="entry name" value="branching_enzym"/>
    <property type="match status" value="1"/>
</dbReference>
<dbReference type="NCBIfam" id="NF003811">
    <property type="entry name" value="PRK05402.1"/>
    <property type="match status" value="1"/>
</dbReference>
<dbReference type="NCBIfam" id="NF008967">
    <property type="entry name" value="PRK12313.1"/>
    <property type="match status" value="1"/>
</dbReference>
<dbReference type="PANTHER" id="PTHR43651">
    <property type="entry name" value="1,4-ALPHA-GLUCAN-BRANCHING ENZYME"/>
    <property type="match status" value="1"/>
</dbReference>
<dbReference type="PANTHER" id="PTHR43651:SF3">
    <property type="entry name" value="1,4-ALPHA-GLUCAN-BRANCHING ENZYME"/>
    <property type="match status" value="1"/>
</dbReference>
<dbReference type="Pfam" id="PF00128">
    <property type="entry name" value="Alpha-amylase"/>
    <property type="match status" value="1"/>
</dbReference>
<dbReference type="Pfam" id="PF02806">
    <property type="entry name" value="Alpha-amylase_C"/>
    <property type="match status" value="1"/>
</dbReference>
<dbReference type="Pfam" id="PF02922">
    <property type="entry name" value="CBM_48"/>
    <property type="match status" value="1"/>
</dbReference>
<dbReference type="PIRSF" id="PIRSF000463">
    <property type="entry name" value="GlgB"/>
    <property type="match status" value="1"/>
</dbReference>
<dbReference type="SMART" id="SM00642">
    <property type="entry name" value="Aamy"/>
    <property type="match status" value="1"/>
</dbReference>
<dbReference type="SUPFAM" id="SSF51445">
    <property type="entry name" value="(Trans)glycosidases"/>
    <property type="match status" value="1"/>
</dbReference>
<dbReference type="SUPFAM" id="SSF51011">
    <property type="entry name" value="Glycosyl hydrolase domain"/>
    <property type="match status" value="1"/>
</dbReference>
<comment type="function">
    <text evidence="1">Catalyzes the formation of the alpha-1,6-glucosidic linkages in glycogen by scission of a 1,4-alpha-linked oligosaccharide from growing alpha-1,4-glucan chains and the subsequent attachment of the oligosaccharide to the alpha-1,6 position.</text>
</comment>
<comment type="catalytic activity">
    <reaction evidence="1">
        <text>Transfers a segment of a (1-&gt;4)-alpha-D-glucan chain to a primary hydroxy group in a similar glucan chain.</text>
        <dbReference type="EC" id="2.4.1.18"/>
    </reaction>
</comment>
<comment type="pathway">
    <text evidence="1">Glycan biosynthesis; glycogen biosynthesis.</text>
</comment>
<comment type="subunit">
    <text evidence="1">Monomer.</text>
</comment>
<comment type="similarity">
    <text evidence="1">Belongs to the glycosyl hydrolase 13 family. GlgB subfamily.</text>
</comment>
<accession>B8CVY1</accession>
<evidence type="ECO:0000255" key="1">
    <source>
        <dbReference type="HAMAP-Rule" id="MF_00685"/>
    </source>
</evidence>
<organism>
    <name type="scientific">Halothermothrix orenii (strain H 168 / OCM 544 / DSM 9562)</name>
    <dbReference type="NCBI Taxonomy" id="373903"/>
    <lineage>
        <taxon>Bacteria</taxon>
        <taxon>Bacillati</taxon>
        <taxon>Bacillota</taxon>
        <taxon>Clostridia</taxon>
        <taxon>Halanaerobiales</taxon>
        <taxon>Halothermotrichaceae</taxon>
        <taxon>Halothermothrix</taxon>
    </lineage>
</organism>